<proteinExistence type="inferred from homology"/>
<reference key="1">
    <citation type="journal article" date="2002" name="Nucleic Acids Res.">
        <title>Genome sequence of Oceanobacillus iheyensis isolated from the Iheya Ridge and its unexpected adaptive capabilities to extreme environments.</title>
        <authorList>
            <person name="Takami H."/>
            <person name="Takaki Y."/>
            <person name="Uchiyama I."/>
        </authorList>
    </citation>
    <scope>NUCLEOTIDE SEQUENCE [LARGE SCALE GENOMIC DNA]</scope>
    <source>
        <strain>DSM 14371 / CIP 107618 / JCM 11309 / KCTC 3954 / HTE831</strain>
    </source>
</reference>
<organism>
    <name type="scientific">Oceanobacillus iheyensis (strain DSM 14371 / CIP 107618 / JCM 11309 / KCTC 3954 / HTE831)</name>
    <dbReference type="NCBI Taxonomy" id="221109"/>
    <lineage>
        <taxon>Bacteria</taxon>
        <taxon>Bacillati</taxon>
        <taxon>Bacillota</taxon>
        <taxon>Bacilli</taxon>
        <taxon>Bacillales</taxon>
        <taxon>Bacillaceae</taxon>
        <taxon>Oceanobacillus</taxon>
    </lineage>
</organism>
<accession>Q8ER78</accession>
<keyword id="KW-1003">Cell membrane</keyword>
<keyword id="KW-1015">Disulfide bond</keyword>
<keyword id="KW-0350">Heme biosynthesis</keyword>
<keyword id="KW-0408">Iron</keyword>
<keyword id="KW-0472">Membrane</keyword>
<keyword id="KW-0479">Metal-binding</keyword>
<keyword id="KW-0560">Oxidoreductase</keyword>
<keyword id="KW-1185">Reference proteome</keyword>
<keyword id="KW-0812">Transmembrane</keyword>
<keyword id="KW-1133">Transmembrane helix</keyword>
<sequence length="309" mass="35026">MTKKLKILSVISTICMIPLLLGGALVTKTGSADGCGNSWPLCEGQFLPTKISFEMFIELSHRGVTGVVGILIVYLTYLVWKELRHNKEVVFLAFSALSLMILQALIGAAAVVWGQSDFALATHFGISLVCFAAVFLLMLQLFEIDKKLHTEDIHINKTHRIEIYAISFYTMCVVYSGALVRHTDSNLACRDWPLCVNNSSFGISDYNFYQWVQMGHRLAAGILFIWTVILTIRMVKHYKNSKVFYWSWLITLGLITLQVLFGALIIFTSLNLAIALFHALFITCYFGMLSFFMHLSFRAKRREKYSNQS</sequence>
<gene>
    <name evidence="1" type="primary">ctaA</name>
    <name type="ordered locus">OB1435</name>
</gene>
<comment type="function">
    <text evidence="1">Catalyzes the conversion of heme O to heme A by two successive hydroxylations of the methyl group at C8. The first hydroxylation forms heme I, the second hydroxylation results in an unstable dihydroxymethyl group, which spontaneously dehydrates, resulting in the formyl group of heme A.</text>
</comment>
<comment type="catalytic activity">
    <reaction evidence="1">
        <text>Fe(II)-heme o + 2 A + H2O = Fe(II)-heme a + 2 AH2</text>
        <dbReference type="Rhea" id="RHEA:63388"/>
        <dbReference type="ChEBI" id="CHEBI:13193"/>
        <dbReference type="ChEBI" id="CHEBI:15377"/>
        <dbReference type="ChEBI" id="CHEBI:17499"/>
        <dbReference type="ChEBI" id="CHEBI:60530"/>
        <dbReference type="ChEBI" id="CHEBI:61715"/>
        <dbReference type="EC" id="1.17.99.9"/>
    </reaction>
    <physiologicalReaction direction="left-to-right" evidence="1">
        <dbReference type="Rhea" id="RHEA:63389"/>
    </physiologicalReaction>
</comment>
<comment type="cofactor">
    <cofactor evidence="1">
        <name>heme b</name>
        <dbReference type="ChEBI" id="CHEBI:60344"/>
    </cofactor>
</comment>
<comment type="pathway">
    <text evidence="1">Porphyrin-containing compound metabolism; heme A biosynthesis; heme A from heme O: step 1/1.</text>
</comment>
<comment type="subunit">
    <text evidence="1">Interacts with CtaB.</text>
</comment>
<comment type="subcellular location">
    <subcellularLocation>
        <location evidence="1">Cell membrane</location>
        <topology evidence="1">Multi-pass membrane protein</topology>
    </subcellularLocation>
</comment>
<comment type="domain">
    <text evidence="1">The N-half (TM1-TM4) and C-half (TM5-TM8) domains are connected by an intracellular loop. Each domain is formed from four-helix bundles and they align in a pseudo twofold symmetry manner. The N-half domain is the substrate-heme O binding domain and the C-half domain is the cofactor heme B binding domain.</text>
</comment>
<comment type="domain">
    <text evidence="1">The cysteines of disulfide bond Cys-35 and Cys-42 may be involved in transfer of reducing equivalents from quinol in the membrane to the active site of the enzyme.</text>
</comment>
<comment type="similarity">
    <text evidence="1">Belongs to the COX15/CtaA family. Type 1 subfamily.</text>
</comment>
<protein>
    <recommendedName>
        <fullName evidence="1">Heme A synthase</fullName>
        <shortName evidence="1">HAS</shortName>
        <ecNumber evidence="1">1.17.99.9</ecNumber>
    </recommendedName>
    <alternativeName>
        <fullName evidence="1">Cytochrome aa3-controlling protein</fullName>
    </alternativeName>
</protein>
<feature type="chain" id="PRO_0000348986" description="Heme A synthase">
    <location>
        <begin position="1"/>
        <end position="309"/>
    </location>
</feature>
<feature type="topological domain" description="Cytoplasmic" evidence="1">
    <location>
        <begin position="1"/>
        <end position="6"/>
    </location>
</feature>
<feature type="transmembrane region" description="Helical" evidence="1">
    <location>
        <begin position="7"/>
        <end position="27"/>
    </location>
</feature>
<feature type="topological domain" description="Extracellular" evidence="1">
    <location>
        <begin position="28"/>
        <end position="62"/>
    </location>
</feature>
<feature type="transmembrane region" description="Helical" evidence="1">
    <location>
        <begin position="63"/>
        <end position="83"/>
    </location>
</feature>
<feature type="topological domain" description="Cytoplasmic" evidence="1">
    <location>
        <begin position="84"/>
        <end position="88"/>
    </location>
</feature>
<feature type="transmembrane region" description="Helical" evidence="1">
    <location>
        <begin position="89"/>
        <end position="109"/>
    </location>
</feature>
<feature type="topological domain" description="Extracellular" evidence="1">
    <location>
        <begin position="110"/>
        <end position="123"/>
    </location>
</feature>
<feature type="transmembrane region" description="Helical" evidence="1">
    <location>
        <begin position="124"/>
        <end position="144"/>
    </location>
</feature>
<feature type="topological domain" description="Cytoplasmic" evidence="1">
    <location>
        <begin position="145"/>
        <end position="159"/>
    </location>
</feature>
<feature type="transmembrane region" description="Helical" evidence="1">
    <location>
        <begin position="160"/>
        <end position="180"/>
    </location>
</feature>
<feature type="topological domain" description="Extracellular" evidence="1">
    <location>
        <begin position="181"/>
        <end position="211"/>
    </location>
</feature>
<feature type="transmembrane region" description="Helical" evidence="1">
    <location>
        <begin position="212"/>
        <end position="232"/>
    </location>
</feature>
<feature type="topological domain" description="Cytoplasmic" evidence="1">
    <location>
        <begin position="233"/>
        <end position="247"/>
    </location>
</feature>
<feature type="transmembrane region" description="Helical" evidence="1">
    <location>
        <begin position="248"/>
        <end position="268"/>
    </location>
</feature>
<feature type="topological domain" description="Extracellular" evidence="1">
    <location>
        <begin position="269"/>
        <end position="271"/>
    </location>
</feature>
<feature type="transmembrane region" description="Helical" evidence="1">
    <location>
        <begin position="272"/>
        <end position="292"/>
    </location>
</feature>
<feature type="topological domain" description="Cytoplasmic" evidence="1">
    <location>
        <begin position="293"/>
        <end position="309"/>
    </location>
</feature>
<feature type="active site" evidence="1">
    <location>
        <position position="58"/>
    </location>
</feature>
<feature type="binding site" description="axial binding residue" evidence="1">
    <location>
        <position position="61"/>
    </location>
    <ligand>
        <name>heme o</name>
        <dbReference type="ChEBI" id="CHEBI:24480"/>
    </ligand>
    <ligandPart>
        <name>Fe</name>
        <dbReference type="ChEBI" id="CHEBI:18248"/>
    </ligandPart>
</feature>
<feature type="binding site" description="axial binding residue" evidence="1">
    <location>
        <position position="123"/>
    </location>
    <ligand>
        <name>heme o</name>
        <dbReference type="ChEBI" id="CHEBI:24480"/>
    </ligand>
    <ligandPart>
        <name>Fe</name>
        <dbReference type="ChEBI" id="CHEBI:18248"/>
    </ligandPart>
</feature>
<feature type="binding site" description="axial binding residue" evidence="1">
    <location>
        <position position="216"/>
    </location>
    <ligand>
        <name>heme b</name>
        <dbReference type="ChEBI" id="CHEBI:60344"/>
    </ligand>
    <ligandPart>
        <name>Fe</name>
        <dbReference type="ChEBI" id="CHEBI:18248"/>
    </ligandPart>
</feature>
<feature type="binding site" description="axial binding residue" evidence="1">
    <location>
        <position position="278"/>
    </location>
    <ligand>
        <name>heme b</name>
        <dbReference type="ChEBI" id="CHEBI:60344"/>
    </ligand>
    <ligandPart>
        <name>Fe</name>
        <dbReference type="ChEBI" id="CHEBI:18248"/>
    </ligandPart>
</feature>
<feature type="disulfide bond" description="Essential for catalytic activity" evidence="1">
    <location>
        <begin position="35"/>
        <end position="42"/>
    </location>
</feature>
<feature type="disulfide bond" evidence="1">
    <location>
        <begin position="189"/>
        <end position="195"/>
    </location>
</feature>
<evidence type="ECO:0000255" key="1">
    <source>
        <dbReference type="HAMAP-Rule" id="MF_01664"/>
    </source>
</evidence>
<name>CTAA_OCEIH</name>
<dbReference type="EC" id="1.17.99.9" evidence="1"/>
<dbReference type="EMBL" id="BA000028">
    <property type="protein sequence ID" value="BAC13391.1"/>
    <property type="molecule type" value="Genomic_DNA"/>
</dbReference>
<dbReference type="RefSeq" id="WP_011065837.1">
    <property type="nucleotide sequence ID" value="NC_004193.1"/>
</dbReference>
<dbReference type="SMR" id="Q8ER78"/>
<dbReference type="STRING" id="221109.gene:10733675"/>
<dbReference type="KEGG" id="oih:OB1435"/>
<dbReference type="eggNOG" id="COG1612">
    <property type="taxonomic scope" value="Bacteria"/>
</dbReference>
<dbReference type="HOGENOM" id="CLU_041525_3_1_9"/>
<dbReference type="OrthoDB" id="9816428at2"/>
<dbReference type="PhylomeDB" id="Q8ER78"/>
<dbReference type="UniPathway" id="UPA00269">
    <property type="reaction ID" value="UER00713"/>
</dbReference>
<dbReference type="Proteomes" id="UP000000822">
    <property type="component" value="Chromosome"/>
</dbReference>
<dbReference type="GO" id="GO:0005886">
    <property type="term" value="C:plasma membrane"/>
    <property type="evidence" value="ECO:0007669"/>
    <property type="project" value="UniProtKB-SubCell"/>
</dbReference>
<dbReference type="GO" id="GO:0046872">
    <property type="term" value="F:metal ion binding"/>
    <property type="evidence" value="ECO:0007669"/>
    <property type="project" value="UniProtKB-KW"/>
</dbReference>
<dbReference type="GO" id="GO:0016653">
    <property type="term" value="F:oxidoreductase activity, acting on NAD(P)H, heme protein as acceptor"/>
    <property type="evidence" value="ECO:0007669"/>
    <property type="project" value="InterPro"/>
</dbReference>
<dbReference type="GO" id="GO:0006784">
    <property type="term" value="P:heme A biosynthetic process"/>
    <property type="evidence" value="ECO:0007669"/>
    <property type="project" value="UniProtKB-UniRule"/>
</dbReference>
<dbReference type="HAMAP" id="MF_01664">
    <property type="entry name" value="HemeA_synth_type1"/>
    <property type="match status" value="1"/>
</dbReference>
<dbReference type="InterPro" id="IPR003780">
    <property type="entry name" value="COX15/CtaA_fam"/>
</dbReference>
<dbReference type="InterPro" id="IPR050450">
    <property type="entry name" value="COX15/CtaA_HemeA_synthase"/>
</dbReference>
<dbReference type="InterPro" id="IPR023755">
    <property type="entry name" value="HemeA_Synthase_type1"/>
</dbReference>
<dbReference type="PANTHER" id="PTHR35457">
    <property type="entry name" value="HEME A SYNTHASE"/>
    <property type="match status" value="1"/>
</dbReference>
<dbReference type="PANTHER" id="PTHR35457:SF1">
    <property type="entry name" value="HEME A SYNTHASE"/>
    <property type="match status" value="1"/>
</dbReference>
<dbReference type="Pfam" id="PF02628">
    <property type="entry name" value="COX15-CtaA"/>
    <property type="match status" value="1"/>
</dbReference>